<keyword id="KW-0012">Acyltransferase</keyword>
<keyword id="KW-0963">Cytoplasm</keyword>
<keyword id="KW-0276">Fatty acid metabolism</keyword>
<keyword id="KW-0442">Lipid degradation</keyword>
<keyword id="KW-0443">Lipid metabolism</keyword>
<keyword id="KW-0808">Transferase</keyword>
<name>FADI_PSEA6</name>
<organism>
    <name type="scientific">Pseudoalteromonas atlantica (strain T6c / ATCC BAA-1087)</name>
    <dbReference type="NCBI Taxonomy" id="3042615"/>
    <lineage>
        <taxon>Bacteria</taxon>
        <taxon>Pseudomonadati</taxon>
        <taxon>Pseudomonadota</taxon>
        <taxon>Gammaproteobacteria</taxon>
        <taxon>Alteromonadales</taxon>
        <taxon>Alteromonadaceae</taxon>
        <taxon>Paraglaciecola</taxon>
    </lineage>
</organism>
<dbReference type="EC" id="2.3.1.16" evidence="1"/>
<dbReference type="EMBL" id="CP000388">
    <property type="protein sequence ID" value="ABG40185.1"/>
    <property type="molecule type" value="Genomic_DNA"/>
</dbReference>
<dbReference type="RefSeq" id="WP_006994137.1">
    <property type="nucleotide sequence ID" value="NC_008228.1"/>
</dbReference>
<dbReference type="SMR" id="Q15VA3"/>
<dbReference type="STRING" id="342610.Patl_1663"/>
<dbReference type="KEGG" id="pat:Patl_1663"/>
<dbReference type="eggNOG" id="COG0183">
    <property type="taxonomic scope" value="Bacteria"/>
</dbReference>
<dbReference type="HOGENOM" id="CLU_031026_2_0_6"/>
<dbReference type="OrthoDB" id="8951704at2"/>
<dbReference type="UniPathway" id="UPA00659"/>
<dbReference type="Proteomes" id="UP000001981">
    <property type="component" value="Chromosome"/>
</dbReference>
<dbReference type="GO" id="GO:0005829">
    <property type="term" value="C:cytosol"/>
    <property type="evidence" value="ECO:0007669"/>
    <property type="project" value="TreeGrafter"/>
</dbReference>
<dbReference type="GO" id="GO:0003988">
    <property type="term" value="F:acetyl-CoA C-acyltransferase activity"/>
    <property type="evidence" value="ECO:0007669"/>
    <property type="project" value="UniProtKB-UniRule"/>
</dbReference>
<dbReference type="GO" id="GO:0006635">
    <property type="term" value="P:fatty acid beta-oxidation"/>
    <property type="evidence" value="ECO:0007669"/>
    <property type="project" value="UniProtKB-UniRule"/>
</dbReference>
<dbReference type="CDD" id="cd00751">
    <property type="entry name" value="thiolase"/>
    <property type="match status" value="1"/>
</dbReference>
<dbReference type="FunFam" id="3.40.47.10:FF:000011">
    <property type="entry name" value="3-ketoacyl-CoA thiolase"/>
    <property type="match status" value="1"/>
</dbReference>
<dbReference type="Gene3D" id="3.40.47.10">
    <property type="match status" value="1"/>
</dbReference>
<dbReference type="HAMAP" id="MF_01618">
    <property type="entry name" value="FadI"/>
    <property type="match status" value="1"/>
</dbReference>
<dbReference type="InterPro" id="IPR050521">
    <property type="entry name" value="3-ketoacyl-CoA_Thiolase"/>
</dbReference>
<dbReference type="InterPro" id="IPR012806">
    <property type="entry name" value="Ac-CoA_C-AcTrfase_FadI"/>
</dbReference>
<dbReference type="InterPro" id="IPR002155">
    <property type="entry name" value="Thiolase"/>
</dbReference>
<dbReference type="InterPro" id="IPR016039">
    <property type="entry name" value="Thiolase-like"/>
</dbReference>
<dbReference type="InterPro" id="IPR020610">
    <property type="entry name" value="Thiolase_AS"/>
</dbReference>
<dbReference type="InterPro" id="IPR020617">
    <property type="entry name" value="Thiolase_C"/>
</dbReference>
<dbReference type="InterPro" id="IPR020616">
    <property type="entry name" value="Thiolase_N"/>
</dbReference>
<dbReference type="NCBIfam" id="TIGR01930">
    <property type="entry name" value="AcCoA-C-Actrans"/>
    <property type="match status" value="1"/>
</dbReference>
<dbReference type="NCBIfam" id="TIGR02446">
    <property type="entry name" value="FadI"/>
    <property type="match status" value="1"/>
</dbReference>
<dbReference type="NCBIfam" id="NF006516">
    <property type="entry name" value="PRK08963.1"/>
    <property type="match status" value="1"/>
</dbReference>
<dbReference type="PANTHER" id="PTHR42689">
    <property type="entry name" value="ACETYL-COA ACYLTRANSFERASE FADA2 (3-KETOACYL-COA THIOLASE) (BETA-KETOTHIOLASE)-RELATED"/>
    <property type="match status" value="1"/>
</dbReference>
<dbReference type="PANTHER" id="PTHR42689:SF1">
    <property type="entry name" value="ACETYL-COA ACYLTRANSFERASE FADA2 (3-KETOACYL-COA THIOLASE) (BETA-KETOTHIOLASE)-RELATED"/>
    <property type="match status" value="1"/>
</dbReference>
<dbReference type="Pfam" id="PF02803">
    <property type="entry name" value="Thiolase_C"/>
    <property type="match status" value="1"/>
</dbReference>
<dbReference type="Pfam" id="PF00108">
    <property type="entry name" value="Thiolase_N"/>
    <property type="match status" value="1"/>
</dbReference>
<dbReference type="PIRSF" id="PIRSF000429">
    <property type="entry name" value="Ac-CoA_Ac_transf"/>
    <property type="match status" value="1"/>
</dbReference>
<dbReference type="SUPFAM" id="SSF53901">
    <property type="entry name" value="Thiolase-like"/>
    <property type="match status" value="2"/>
</dbReference>
<dbReference type="PROSITE" id="PS00099">
    <property type="entry name" value="THIOLASE_3"/>
    <property type="match status" value="1"/>
</dbReference>
<sequence>MTAKQTVTTRDGERIAIVAGLRTPFAKMATNFHGVPAVDLGKMVVNEMLVKHNVDPLLIEQLVYGQVVQMPEAPNIAREIVLGTGMSVHTDAYSVSRACATSFQSTVNIAESMMLGNISVGIAGGADSTSVSPIGVSKNLARALTDLQKTKTLGQKFNVLKKLGLKDLLPVPPAVAEYSTGLSMGQTAEQMAKSHSISRADQDKLAHRSHSLAAQSWNEGKLAGEVMTAYPAPYKSAFEKDNNIRFDSKLEGYAKLRPVFDKKHGTVTAANATPLTDGASAVLMMTESRAKALGYTPLGYIKSYAFAAIDVWEDMLMGPSYATPMALDRAGMTLNDLTLIEMHEAFAAQTLANIKMFASDKFAQEKLGRSKATGEIDMAKFNVMGSSLAYGHPFAATGTRMITQMLNELNRRGGGSGLLTACAAGGLAAAMIVETE</sequence>
<reference key="1">
    <citation type="submission" date="2006-06" db="EMBL/GenBank/DDBJ databases">
        <title>Complete sequence of Pseudoalteromonas atlantica T6c.</title>
        <authorList>
            <consortium name="US DOE Joint Genome Institute"/>
            <person name="Copeland A."/>
            <person name="Lucas S."/>
            <person name="Lapidus A."/>
            <person name="Barry K."/>
            <person name="Detter J.C."/>
            <person name="Glavina del Rio T."/>
            <person name="Hammon N."/>
            <person name="Israni S."/>
            <person name="Dalin E."/>
            <person name="Tice H."/>
            <person name="Pitluck S."/>
            <person name="Saunders E."/>
            <person name="Brettin T."/>
            <person name="Bruce D."/>
            <person name="Han C."/>
            <person name="Tapia R."/>
            <person name="Gilna P."/>
            <person name="Schmutz J."/>
            <person name="Larimer F."/>
            <person name="Land M."/>
            <person name="Hauser L."/>
            <person name="Kyrpides N."/>
            <person name="Kim E."/>
            <person name="Karls A.C."/>
            <person name="Bartlett D."/>
            <person name="Higgins B.P."/>
            <person name="Richardson P."/>
        </authorList>
    </citation>
    <scope>NUCLEOTIDE SEQUENCE [LARGE SCALE GENOMIC DNA]</scope>
    <source>
        <strain>T6c / ATCC BAA-1087</strain>
    </source>
</reference>
<evidence type="ECO:0000255" key="1">
    <source>
        <dbReference type="HAMAP-Rule" id="MF_01618"/>
    </source>
</evidence>
<comment type="function">
    <text evidence="1">Catalyzes the final step of fatty acid oxidation in which acetyl-CoA is released and the CoA ester of a fatty acid two carbons shorter is formed.</text>
</comment>
<comment type="catalytic activity">
    <reaction evidence="1">
        <text>an acyl-CoA + acetyl-CoA = a 3-oxoacyl-CoA + CoA</text>
        <dbReference type="Rhea" id="RHEA:21564"/>
        <dbReference type="ChEBI" id="CHEBI:57287"/>
        <dbReference type="ChEBI" id="CHEBI:57288"/>
        <dbReference type="ChEBI" id="CHEBI:58342"/>
        <dbReference type="ChEBI" id="CHEBI:90726"/>
        <dbReference type="EC" id="2.3.1.16"/>
    </reaction>
</comment>
<comment type="pathway">
    <text evidence="1">Lipid metabolism; fatty acid beta-oxidation.</text>
</comment>
<comment type="subunit">
    <text evidence="1">Heterotetramer of two alpha chains (FadJ) and two beta chains (FadI).</text>
</comment>
<comment type="subcellular location">
    <subcellularLocation>
        <location evidence="1">Cytoplasm</location>
    </subcellularLocation>
</comment>
<comment type="similarity">
    <text evidence="1">Belongs to the thiolase-like superfamily. Thiolase family.</text>
</comment>
<feature type="chain" id="PRO_1000069503" description="3-ketoacyl-CoA thiolase">
    <location>
        <begin position="1"/>
        <end position="436"/>
    </location>
</feature>
<feature type="active site" description="Acyl-thioester intermediate" evidence="1">
    <location>
        <position position="99"/>
    </location>
</feature>
<feature type="active site" description="Proton acceptor" evidence="1">
    <location>
        <position position="392"/>
    </location>
</feature>
<feature type="active site" description="Proton acceptor" evidence="1">
    <location>
        <position position="422"/>
    </location>
</feature>
<accession>Q15VA3</accession>
<proteinExistence type="inferred from homology"/>
<protein>
    <recommendedName>
        <fullName evidence="1">3-ketoacyl-CoA thiolase</fullName>
        <ecNumber evidence="1">2.3.1.16</ecNumber>
    </recommendedName>
    <alternativeName>
        <fullName evidence="1">ACSs</fullName>
    </alternativeName>
    <alternativeName>
        <fullName evidence="1">Acetyl-CoA acyltransferase</fullName>
    </alternativeName>
    <alternativeName>
        <fullName evidence="1">Acyl-CoA ligase</fullName>
    </alternativeName>
    <alternativeName>
        <fullName evidence="1">Beta-ketothiolase</fullName>
    </alternativeName>
    <alternativeName>
        <fullName evidence="1">Fatty acid oxidation complex subunit beta</fullName>
    </alternativeName>
</protein>
<gene>
    <name evidence="1" type="primary">fadI</name>
    <name type="ordered locus">Patl_1663</name>
</gene>